<organism>
    <name type="scientific">Takifugu rubripes</name>
    <name type="common">Japanese pufferfish</name>
    <name type="synonym">Fugu rubripes</name>
    <dbReference type="NCBI Taxonomy" id="31033"/>
    <lineage>
        <taxon>Eukaryota</taxon>
        <taxon>Metazoa</taxon>
        <taxon>Chordata</taxon>
        <taxon>Craniata</taxon>
        <taxon>Vertebrata</taxon>
        <taxon>Euteleostomi</taxon>
        <taxon>Actinopterygii</taxon>
        <taxon>Neopterygii</taxon>
        <taxon>Teleostei</taxon>
        <taxon>Neoteleostei</taxon>
        <taxon>Acanthomorphata</taxon>
        <taxon>Eupercaria</taxon>
        <taxon>Tetraodontiformes</taxon>
        <taxon>Tetradontoidea</taxon>
        <taxon>Tetraodontidae</taxon>
        <taxon>Takifugu</taxon>
    </lineage>
</organism>
<accession>O42386</accession>
<keyword id="KW-0963">Cytoplasm</keyword>
<keyword id="KW-1185">Reference proteome</keyword>
<keyword id="KW-0683">Retinol-binding</keyword>
<keyword id="KW-0813">Transport</keyword>
<keyword id="KW-0845">Vitamin A</keyword>
<sequence>MPNFAGTWKMKSSENFDELLKALGVNTMLRKVAVAAASNPHVEIRQDGEKFYIKTSTTVRTTEINFHIGEEFDEETVDGRKCKSLPTWESENKIRCKQTLVEGDGPKTFWTRELNGDELTLVFGADDVVCTRIYVRE</sequence>
<name>RABP1_TAKRU</name>
<reference key="1">
    <citation type="journal article" date="1998" name="Transgenic Res.">
        <title>Cloning and sequencing of the CRABP-I locus from chicken and pufferfish: analysis of the promoter regions in transgenic mice.</title>
        <authorList>
            <person name="Kleinjan D.A."/>
            <person name="Dekker S."/>
            <person name="Guy J.A."/>
            <person name="Grosveld F.G."/>
        </authorList>
    </citation>
    <scope>NUCLEOTIDE SEQUENCE [GENOMIC DNA]</scope>
</reference>
<feature type="initiator methionine" description="Removed" evidence="1">
    <location>
        <position position="1"/>
    </location>
</feature>
<feature type="chain" id="PRO_0000067410" description="Cellular retinoic acid-binding protein 1">
    <location>
        <begin position="2"/>
        <end position="137"/>
    </location>
</feature>
<feature type="short sequence motif" description="Nuclear localization signal" evidence="1">
    <location>
        <begin position="21"/>
        <end position="31"/>
    </location>
</feature>
<feature type="binding site" evidence="1">
    <location>
        <begin position="132"/>
        <end position="134"/>
    </location>
    <ligand>
        <name>all-trans-retinoate</name>
        <dbReference type="ChEBI" id="CHEBI:35291"/>
    </ligand>
</feature>
<evidence type="ECO:0000250" key="1"/>
<evidence type="ECO:0000305" key="2"/>
<dbReference type="EMBL" id="Y12240">
    <property type="protein sequence ID" value="CAA72929.1"/>
    <property type="molecule type" value="Genomic_DNA"/>
</dbReference>
<dbReference type="EMBL" id="Y12241">
    <property type="protein sequence ID" value="CAA72929.1"/>
    <property type="status" value="JOINED"/>
    <property type="molecule type" value="Genomic_DNA"/>
</dbReference>
<dbReference type="EMBL" id="Y12242">
    <property type="protein sequence ID" value="CAA72929.1"/>
    <property type="status" value="JOINED"/>
    <property type="molecule type" value="Genomic_DNA"/>
</dbReference>
<dbReference type="SMR" id="O42386"/>
<dbReference type="FunCoup" id="O42386">
    <property type="interactions" value="576"/>
</dbReference>
<dbReference type="STRING" id="31033.ENSTRUP00000070533"/>
<dbReference type="eggNOG" id="KOG4015">
    <property type="taxonomic scope" value="Eukaryota"/>
</dbReference>
<dbReference type="InParanoid" id="O42386"/>
<dbReference type="Proteomes" id="UP000005226">
    <property type="component" value="Unplaced"/>
</dbReference>
<dbReference type="GO" id="GO:0005737">
    <property type="term" value="C:cytoplasm"/>
    <property type="evidence" value="ECO:0007669"/>
    <property type="project" value="UniProtKB-SubCell"/>
</dbReference>
<dbReference type="GO" id="GO:0016918">
    <property type="term" value="F:retinal binding"/>
    <property type="evidence" value="ECO:0007669"/>
    <property type="project" value="UniProtKB-KW"/>
</dbReference>
<dbReference type="GO" id="GO:0019841">
    <property type="term" value="F:retinol binding"/>
    <property type="evidence" value="ECO:0007669"/>
    <property type="project" value="UniProtKB-KW"/>
</dbReference>
<dbReference type="CDD" id="cd19460">
    <property type="entry name" value="CRABP1"/>
    <property type="match status" value="1"/>
</dbReference>
<dbReference type="FunFam" id="2.40.128.20:FF:000001">
    <property type="entry name" value="Fatty acid-binding protein, adipocyte"/>
    <property type="match status" value="1"/>
</dbReference>
<dbReference type="Gene3D" id="2.40.128.20">
    <property type="match status" value="1"/>
</dbReference>
<dbReference type="InterPro" id="IPR012674">
    <property type="entry name" value="Calycin"/>
</dbReference>
<dbReference type="InterPro" id="IPR000463">
    <property type="entry name" value="Fatty_acid-bd"/>
</dbReference>
<dbReference type="InterPro" id="IPR031259">
    <property type="entry name" value="ILBP"/>
</dbReference>
<dbReference type="InterPro" id="IPR000566">
    <property type="entry name" value="Lipocln_cytosolic_FA-bd_dom"/>
</dbReference>
<dbReference type="PANTHER" id="PTHR11955">
    <property type="entry name" value="FATTY ACID BINDING PROTEIN"/>
    <property type="match status" value="1"/>
</dbReference>
<dbReference type="Pfam" id="PF00061">
    <property type="entry name" value="Lipocalin"/>
    <property type="match status" value="1"/>
</dbReference>
<dbReference type="PRINTS" id="PR00178">
    <property type="entry name" value="FATTYACIDBP"/>
</dbReference>
<dbReference type="SUPFAM" id="SSF50814">
    <property type="entry name" value="Lipocalins"/>
    <property type="match status" value="1"/>
</dbReference>
<dbReference type="PROSITE" id="PS00214">
    <property type="entry name" value="FABP"/>
    <property type="match status" value="1"/>
</dbReference>
<gene>
    <name type="primary">crabp1</name>
</gene>
<proteinExistence type="inferred from homology"/>
<protein>
    <recommendedName>
        <fullName>Cellular retinoic acid-binding protein 1</fullName>
    </recommendedName>
    <alternativeName>
        <fullName>Cellular retinoic acid-binding protein I</fullName>
        <shortName>CRABP-I</shortName>
    </alternativeName>
</protein>
<comment type="function">
    <text>Cytosolic CRABPs may regulate the access of retinoic acid to the nuclear retinoic acid receptors.</text>
</comment>
<comment type="subcellular location">
    <subcellularLocation>
        <location>Cytoplasm</location>
    </subcellularLocation>
</comment>
<comment type="domain">
    <text evidence="1">Forms a beta-barrel structure that accommodates hydrophobic ligands in its interior.</text>
</comment>
<comment type="similarity">
    <text evidence="2">Belongs to the calycin superfamily. Fatty-acid binding protein (FABP) family.</text>
</comment>